<comment type="function">
    <text evidence="1">This protein binds to 23S rRNA in the presence of protein L20.</text>
</comment>
<comment type="subunit">
    <text evidence="1">Part of the 50S ribosomal subunit. Contacts protein L20.</text>
</comment>
<comment type="similarity">
    <text evidence="1">Belongs to the bacterial ribosomal protein bL21 family.</text>
</comment>
<proteinExistence type="inferred from homology"/>
<accession>C3M9X5</accession>
<dbReference type="EMBL" id="CP001389">
    <property type="protein sequence ID" value="ACP26900.1"/>
    <property type="molecule type" value="Genomic_DNA"/>
</dbReference>
<dbReference type="RefSeq" id="WP_012709651.1">
    <property type="nucleotide sequence ID" value="NC_012587.1"/>
</dbReference>
<dbReference type="RefSeq" id="YP_002827653.1">
    <property type="nucleotide sequence ID" value="NC_012587.1"/>
</dbReference>
<dbReference type="SMR" id="C3M9X5"/>
<dbReference type="STRING" id="394.NGR_c31660"/>
<dbReference type="GeneID" id="48974799"/>
<dbReference type="KEGG" id="rhi:NGR_c31660"/>
<dbReference type="PATRIC" id="fig|394.7.peg.6004"/>
<dbReference type="eggNOG" id="COG0261">
    <property type="taxonomic scope" value="Bacteria"/>
</dbReference>
<dbReference type="HOGENOM" id="CLU_061463_1_2_5"/>
<dbReference type="OrthoDB" id="9813334at2"/>
<dbReference type="Proteomes" id="UP000001054">
    <property type="component" value="Chromosome"/>
</dbReference>
<dbReference type="GO" id="GO:0005737">
    <property type="term" value="C:cytoplasm"/>
    <property type="evidence" value="ECO:0007669"/>
    <property type="project" value="UniProtKB-ARBA"/>
</dbReference>
<dbReference type="GO" id="GO:1990904">
    <property type="term" value="C:ribonucleoprotein complex"/>
    <property type="evidence" value="ECO:0007669"/>
    <property type="project" value="UniProtKB-KW"/>
</dbReference>
<dbReference type="GO" id="GO:0005840">
    <property type="term" value="C:ribosome"/>
    <property type="evidence" value="ECO:0007669"/>
    <property type="project" value="UniProtKB-KW"/>
</dbReference>
<dbReference type="GO" id="GO:0019843">
    <property type="term" value="F:rRNA binding"/>
    <property type="evidence" value="ECO:0007669"/>
    <property type="project" value="UniProtKB-UniRule"/>
</dbReference>
<dbReference type="GO" id="GO:0003735">
    <property type="term" value="F:structural constituent of ribosome"/>
    <property type="evidence" value="ECO:0007669"/>
    <property type="project" value="InterPro"/>
</dbReference>
<dbReference type="GO" id="GO:0006412">
    <property type="term" value="P:translation"/>
    <property type="evidence" value="ECO:0007669"/>
    <property type="project" value="UniProtKB-UniRule"/>
</dbReference>
<dbReference type="HAMAP" id="MF_01363">
    <property type="entry name" value="Ribosomal_bL21"/>
    <property type="match status" value="1"/>
</dbReference>
<dbReference type="InterPro" id="IPR028909">
    <property type="entry name" value="bL21-like"/>
</dbReference>
<dbReference type="InterPro" id="IPR036164">
    <property type="entry name" value="bL21-like_sf"/>
</dbReference>
<dbReference type="InterPro" id="IPR001787">
    <property type="entry name" value="Ribosomal_bL21"/>
</dbReference>
<dbReference type="NCBIfam" id="TIGR00061">
    <property type="entry name" value="L21"/>
    <property type="match status" value="1"/>
</dbReference>
<dbReference type="PANTHER" id="PTHR21349">
    <property type="entry name" value="50S RIBOSOMAL PROTEIN L21"/>
    <property type="match status" value="1"/>
</dbReference>
<dbReference type="PANTHER" id="PTHR21349:SF0">
    <property type="entry name" value="LARGE RIBOSOMAL SUBUNIT PROTEIN BL21M"/>
    <property type="match status" value="1"/>
</dbReference>
<dbReference type="Pfam" id="PF00829">
    <property type="entry name" value="Ribosomal_L21p"/>
    <property type="match status" value="1"/>
</dbReference>
<dbReference type="SUPFAM" id="SSF141091">
    <property type="entry name" value="L21p-like"/>
    <property type="match status" value="1"/>
</dbReference>
<feature type="chain" id="PRO_1000166736" description="Large ribosomal subunit protein bL21">
    <location>
        <begin position="1"/>
        <end position="123"/>
    </location>
</feature>
<gene>
    <name evidence="1" type="primary">rplU</name>
    <name type="ordered locus">NGR_c31660</name>
</gene>
<keyword id="KW-1185">Reference proteome</keyword>
<keyword id="KW-0687">Ribonucleoprotein</keyword>
<keyword id="KW-0689">Ribosomal protein</keyword>
<keyword id="KW-0694">RNA-binding</keyword>
<keyword id="KW-0699">rRNA-binding</keyword>
<evidence type="ECO:0000255" key="1">
    <source>
        <dbReference type="HAMAP-Rule" id="MF_01363"/>
    </source>
</evidence>
<evidence type="ECO:0000305" key="2"/>
<name>RL21_SINFN</name>
<protein>
    <recommendedName>
        <fullName evidence="1">Large ribosomal subunit protein bL21</fullName>
    </recommendedName>
    <alternativeName>
        <fullName evidence="2">50S ribosomal protein L21</fullName>
    </alternativeName>
</protein>
<sequence>MFAVIKTGGKQYRVAADDVITIEKLEGVAGDKIEFTEILMVGVGADATIGAPFVEGAVVSAEVVDQGRAKKVIAFKKRRRQNSKRSRGHRQHQTVVRILDIAAAGGKAKKASKKTEAAAEAAN</sequence>
<organism>
    <name type="scientific">Sinorhizobium fredii (strain NBRC 101917 / NGR234)</name>
    <dbReference type="NCBI Taxonomy" id="394"/>
    <lineage>
        <taxon>Bacteria</taxon>
        <taxon>Pseudomonadati</taxon>
        <taxon>Pseudomonadota</taxon>
        <taxon>Alphaproteobacteria</taxon>
        <taxon>Hyphomicrobiales</taxon>
        <taxon>Rhizobiaceae</taxon>
        <taxon>Sinorhizobium/Ensifer group</taxon>
        <taxon>Sinorhizobium</taxon>
    </lineage>
</organism>
<reference key="1">
    <citation type="journal article" date="2009" name="Appl. Environ. Microbiol.">
        <title>Rhizobium sp. strain NGR234 possesses a remarkable number of secretion systems.</title>
        <authorList>
            <person name="Schmeisser C."/>
            <person name="Liesegang H."/>
            <person name="Krysciak D."/>
            <person name="Bakkou N."/>
            <person name="Le Quere A."/>
            <person name="Wollherr A."/>
            <person name="Heinemeyer I."/>
            <person name="Morgenstern B."/>
            <person name="Pommerening-Roeser A."/>
            <person name="Flores M."/>
            <person name="Palacios R."/>
            <person name="Brenner S."/>
            <person name="Gottschalk G."/>
            <person name="Schmitz R.A."/>
            <person name="Broughton W.J."/>
            <person name="Perret X."/>
            <person name="Strittmatter A.W."/>
            <person name="Streit W.R."/>
        </authorList>
    </citation>
    <scope>NUCLEOTIDE SEQUENCE [LARGE SCALE GENOMIC DNA]</scope>
    <source>
        <strain>NBRC 101917 / NGR234</strain>
    </source>
</reference>